<name>DXS_MALP2</name>
<comment type="function">
    <text evidence="1">Catalyzes the acyloin condensation reaction between C atoms 2 and 3 of pyruvate and glyceraldehyde 3-phosphate to yield 1-deoxy-D-xylulose-5-phosphate (DXP).</text>
</comment>
<comment type="catalytic activity">
    <reaction evidence="1">
        <text>D-glyceraldehyde 3-phosphate + pyruvate + H(+) = 1-deoxy-D-xylulose 5-phosphate + CO2</text>
        <dbReference type="Rhea" id="RHEA:12605"/>
        <dbReference type="ChEBI" id="CHEBI:15361"/>
        <dbReference type="ChEBI" id="CHEBI:15378"/>
        <dbReference type="ChEBI" id="CHEBI:16526"/>
        <dbReference type="ChEBI" id="CHEBI:57792"/>
        <dbReference type="ChEBI" id="CHEBI:59776"/>
        <dbReference type="EC" id="2.2.1.7"/>
    </reaction>
</comment>
<comment type="cofactor">
    <cofactor evidence="1">
        <name>Mg(2+)</name>
        <dbReference type="ChEBI" id="CHEBI:18420"/>
    </cofactor>
    <text evidence="1">Binds 1 Mg(2+) ion per subunit.</text>
</comment>
<comment type="cofactor">
    <cofactor evidence="1">
        <name>thiamine diphosphate</name>
        <dbReference type="ChEBI" id="CHEBI:58937"/>
    </cofactor>
    <text evidence="1">Binds 1 thiamine pyrophosphate per subunit.</text>
</comment>
<comment type="pathway">
    <text evidence="1">Metabolic intermediate biosynthesis; 1-deoxy-D-xylulose 5-phosphate biosynthesis; 1-deoxy-D-xylulose 5-phosphate from D-glyceraldehyde 3-phosphate and pyruvate: step 1/1.</text>
</comment>
<comment type="subunit">
    <text evidence="1">Homodimer.</text>
</comment>
<comment type="similarity">
    <text evidence="1">Belongs to the transketolase family. DXPS subfamily.</text>
</comment>
<reference key="1">
    <citation type="journal article" date="2002" name="Nucleic Acids Res.">
        <title>The complete genomic sequence of Mycoplasma penetrans, an intracellular bacterial pathogen in humans.</title>
        <authorList>
            <person name="Sasaki Y."/>
            <person name="Ishikawa J."/>
            <person name="Yamashita A."/>
            <person name="Oshima K."/>
            <person name="Kenri T."/>
            <person name="Furuya K."/>
            <person name="Yoshino C."/>
            <person name="Horino A."/>
            <person name="Shiba T."/>
            <person name="Sasaki T."/>
            <person name="Hattori M."/>
        </authorList>
    </citation>
    <scope>NUCLEOTIDE SEQUENCE [LARGE SCALE GENOMIC DNA]</scope>
    <source>
        <strain>HF-2</strain>
    </source>
</reference>
<keyword id="KW-0414">Isoprene biosynthesis</keyword>
<keyword id="KW-0460">Magnesium</keyword>
<keyword id="KW-0479">Metal-binding</keyword>
<keyword id="KW-1185">Reference proteome</keyword>
<keyword id="KW-0784">Thiamine biosynthesis</keyword>
<keyword id="KW-0786">Thiamine pyrophosphate</keyword>
<keyword id="KW-0808">Transferase</keyword>
<accession>Q8EWX7</accession>
<dbReference type="EC" id="2.2.1.7" evidence="1"/>
<dbReference type="EMBL" id="BA000026">
    <property type="protein sequence ID" value="BAC43863.1"/>
    <property type="molecule type" value="Genomic_DNA"/>
</dbReference>
<dbReference type="RefSeq" id="WP_011076899.1">
    <property type="nucleotide sequence ID" value="NC_004432.1"/>
</dbReference>
<dbReference type="SMR" id="Q8EWX7"/>
<dbReference type="FunCoup" id="Q8EWX7">
    <property type="interactions" value="191"/>
</dbReference>
<dbReference type="STRING" id="272633.gene:10731164"/>
<dbReference type="KEGG" id="mpe:MYPE730"/>
<dbReference type="eggNOG" id="COG1154">
    <property type="taxonomic scope" value="Bacteria"/>
</dbReference>
<dbReference type="HOGENOM" id="CLU_009227_1_4_14"/>
<dbReference type="InParanoid" id="Q8EWX7"/>
<dbReference type="UniPathway" id="UPA00064">
    <property type="reaction ID" value="UER00091"/>
</dbReference>
<dbReference type="Proteomes" id="UP000002522">
    <property type="component" value="Chromosome"/>
</dbReference>
<dbReference type="GO" id="GO:0005829">
    <property type="term" value="C:cytosol"/>
    <property type="evidence" value="ECO:0007669"/>
    <property type="project" value="TreeGrafter"/>
</dbReference>
<dbReference type="GO" id="GO:0008661">
    <property type="term" value="F:1-deoxy-D-xylulose-5-phosphate synthase activity"/>
    <property type="evidence" value="ECO:0007669"/>
    <property type="project" value="UniProtKB-UniRule"/>
</dbReference>
<dbReference type="GO" id="GO:0000287">
    <property type="term" value="F:magnesium ion binding"/>
    <property type="evidence" value="ECO:0007669"/>
    <property type="project" value="UniProtKB-UniRule"/>
</dbReference>
<dbReference type="GO" id="GO:0030976">
    <property type="term" value="F:thiamine pyrophosphate binding"/>
    <property type="evidence" value="ECO:0007669"/>
    <property type="project" value="UniProtKB-UniRule"/>
</dbReference>
<dbReference type="GO" id="GO:0052865">
    <property type="term" value="P:1-deoxy-D-xylulose 5-phosphate biosynthetic process"/>
    <property type="evidence" value="ECO:0007669"/>
    <property type="project" value="UniProtKB-UniPathway"/>
</dbReference>
<dbReference type="GO" id="GO:0019288">
    <property type="term" value="P:isopentenyl diphosphate biosynthetic process, methylerythritol 4-phosphate pathway"/>
    <property type="evidence" value="ECO:0007669"/>
    <property type="project" value="TreeGrafter"/>
</dbReference>
<dbReference type="GO" id="GO:0016114">
    <property type="term" value="P:terpenoid biosynthetic process"/>
    <property type="evidence" value="ECO:0007669"/>
    <property type="project" value="UniProtKB-UniRule"/>
</dbReference>
<dbReference type="GO" id="GO:0009228">
    <property type="term" value="P:thiamine biosynthetic process"/>
    <property type="evidence" value="ECO:0007669"/>
    <property type="project" value="UniProtKB-UniRule"/>
</dbReference>
<dbReference type="CDD" id="cd02007">
    <property type="entry name" value="TPP_DXS"/>
    <property type="match status" value="1"/>
</dbReference>
<dbReference type="CDD" id="cd07033">
    <property type="entry name" value="TPP_PYR_DXS_TK_like"/>
    <property type="match status" value="1"/>
</dbReference>
<dbReference type="Gene3D" id="3.40.50.920">
    <property type="match status" value="1"/>
</dbReference>
<dbReference type="Gene3D" id="3.40.50.970">
    <property type="match status" value="2"/>
</dbReference>
<dbReference type="HAMAP" id="MF_00315">
    <property type="entry name" value="DXP_synth"/>
    <property type="match status" value="1"/>
</dbReference>
<dbReference type="InterPro" id="IPR005477">
    <property type="entry name" value="Dxylulose-5-P_synthase"/>
</dbReference>
<dbReference type="InterPro" id="IPR029061">
    <property type="entry name" value="THDP-binding"/>
</dbReference>
<dbReference type="InterPro" id="IPR009014">
    <property type="entry name" value="Transketo_C/PFOR_II"/>
</dbReference>
<dbReference type="InterPro" id="IPR005475">
    <property type="entry name" value="Transketolase-like_Pyr-bd"/>
</dbReference>
<dbReference type="NCBIfam" id="TIGR00204">
    <property type="entry name" value="dxs"/>
    <property type="match status" value="1"/>
</dbReference>
<dbReference type="NCBIfam" id="NF003933">
    <property type="entry name" value="PRK05444.2-2"/>
    <property type="match status" value="1"/>
</dbReference>
<dbReference type="PANTHER" id="PTHR43322">
    <property type="entry name" value="1-D-DEOXYXYLULOSE 5-PHOSPHATE SYNTHASE-RELATED"/>
    <property type="match status" value="1"/>
</dbReference>
<dbReference type="PANTHER" id="PTHR43322:SF5">
    <property type="entry name" value="1-DEOXY-D-XYLULOSE-5-PHOSPHATE SYNTHASE, CHLOROPLASTIC"/>
    <property type="match status" value="1"/>
</dbReference>
<dbReference type="Pfam" id="PF13292">
    <property type="entry name" value="DXP_synthase_N"/>
    <property type="match status" value="1"/>
</dbReference>
<dbReference type="Pfam" id="PF02779">
    <property type="entry name" value="Transket_pyr"/>
    <property type="match status" value="1"/>
</dbReference>
<dbReference type="SMART" id="SM00861">
    <property type="entry name" value="Transket_pyr"/>
    <property type="match status" value="1"/>
</dbReference>
<dbReference type="SUPFAM" id="SSF52518">
    <property type="entry name" value="Thiamin diphosphate-binding fold (THDP-binding)"/>
    <property type="match status" value="1"/>
</dbReference>
<gene>
    <name evidence="1" type="primary">dxs</name>
    <name type="ordered locus">MYPE730</name>
</gene>
<proteinExistence type="inferred from homology"/>
<organism>
    <name type="scientific">Malacoplasma penetrans (strain HF-2)</name>
    <name type="common">Mycoplasma penetrans</name>
    <dbReference type="NCBI Taxonomy" id="272633"/>
    <lineage>
        <taxon>Bacteria</taxon>
        <taxon>Bacillati</taxon>
        <taxon>Mycoplasmatota</taxon>
        <taxon>Mycoplasmoidales</taxon>
        <taxon>Mycoplasmoidaceae</taxon>
        <taxon>Malacoplasma</taxon>
    </lineage>
</organism>
<sequence length="612" mass="69551">MKKNKVKIDKIPNYEDFKKMKLHELLDLAVLLRKKIIDISENKSAHLSSNLGIVELSMALLYVFDSPQDLIAYDTGHQCYVHKMITDRADKISTIRESNGLSGFQEPNESIHDFISTGHSGNILSICQGFIEKNNSKSKSVIPVIGDAAISNGLAFEALNNIAYNKTPMLIIINDNGMSISKNVGALHKIMSKFQMSKSVFLTEKILRKILFKKEWSKKIYWSIYKSFSKLSKFFKGKNFFESLGFHYFGVIDGNNLKKTINVLKRIKNIVPFGPTILHVKTIKGLGYKEAELDDKGLYHSLKLSDPNLNSNNQTYGSVAANFLEKLIEYDNNIQIINPAMTLSSNFLNLSKKFPNNYEDVGIAEEHAVTKAAGMAIANKKVFVSIYSTFLQRSYDNLLHDVARLELPITFLVDRCDLSYSDGDTHHGIYDIGFLKSIPNTIITCASNKFELERLIILAYQNKSNPFFIRYTKEKCEDIEVKKEFSFGSWVYALQTKESKTCIISYGDIINDLKKEIKTKSIDLINAVFITNYQKENVLRILSTYKNIYVVEKVFDSNCLGDDLIILANENKLSCNIKKINIRNNKIGFGNKEDIDKKLNIDMNSIFAEIKS</sequence>
<feature type="chain" id="PRO_0000189132" description="1-deoxy-D-xylulose-5-phosphate synthase">
    <location>
        <begin position="1"/>
        <end position="612"/>
    </location>
</feature>
<feature type="binding site" evidence="1">
    <location>
        <position position="77"/>
    </location>
    <ligand>
        <name>thiamine diphosphate</name>
        <dbReference type="ChEBI" id="CHEBI:58937"/>
    </ligand>
</feature>
<feature type="binding site" evidence="1">
    <location>
        <begin position="118"/>
        <end position="120"/>
    </location>
    <ligand>
        <name>thiamine diphosphate</name>
        <dbReference type="ChEBI" id="CHEBI:58937"/>
    </ligand>
</feature>
<feature type="binding site" evidence="1">
    <location>
        <position position="147"/>
    </location>
    <ligand>
        <name>Mg(2+)</name>
        <dbReference type="ChEBI" id="CHEBI:18420"/>
    </ligand>
</feature>
<feature type="binding site" evidence="1">
    <location>
        <begin position="148"/>
        <end position="149"/>
    </location>
    <ligand>
        <name>thiamine diphosphate</name>
        <dbReference type="ChEBI" id="CHEBI:58937"/>
    </ligand>
</feature>
<feature type="binding site" evidence="1">
    <location>
        <position position="176"/>
    </location>
    <ligand>
        <name>Mg(2+)</name>
        <dbReference type="ChEBI" id="CHEBI:18420"/>
    </ligand>
</feature>
<feature type="binding site" evidence="1">
    <location>
        <position position="176"/>
    </location>
    <ligand>
        <name>thiamine diphosphate</name>
        <dbReference type="ChEBI" id="CHEBI:58937"/>
    </ligand>
</feature>
<feature type="binding site" evidence="1">
    <location>
        <position position="288"/>
    </location>
    <ligand>
        <name>thiamine diphosphate</name>
        <dbReference type="ChEBI" id="CHEBI:58937"/>
    </ligand>
</feature>
<feature type="binding site" evidence="1">
    <location>
        <position position="365"/>
    </location>
    <ligand>
        <name>thiamine diphosphate</name>
        <dbReference type="ChEBI" id="CHEBI:58937"/>
    </ligand>
</feature>
<protein>
    <recommendedName>
        <fullName evidence="1">1-deoxy-D-xylulose-5-phosphate synthase</fullName>
        <ecNumber evidence="1">2.2.1.7</ecNumber>
    </recommendedName>
    <alternativeName>
        <fullName evidence="1">1-deoxyxylulose-5-phosphate synthase</fullName>
        <shortName evidence="1">DXP synthase</shortName>
        <shortName evidence="1">DXPS</shortName>
    </alternativeName>
</protein>
<evidence type="ECO:0000255" key="1">
    <source>
        <dbReference type="HAMAP-Rule" id="MF_00315"/>
    </source>
</evidence>